<proteinExistence type="inferred from homology"/>
<organism>
    <name type="scientific">Salmo salar</name>
    <name type="common">Atlantic salmon</name>
    <dbReference type="NCBI Taxonomy" id="8030"/>
    <lineage>
        <taxon>Eukaryota</taxon>
        <taxon>Metazoa</taxon>
        <taxon>Chordata</taxon>
        <taxon>Craniata</taxon>
        <taxon>Vertebrata</taxon>
        <taxon>Euteleostomi</taxon>
        <taxon>Actinopterygii</taxon>
        <taxon>Neopterygii</taxon>
        <taxon>Teleostei</taxon>
        <taxon>Protacanthopterygii</taxon>
        <taxon>Salmoniformes</taxon>
        <taxon>Salmonidae</taxon>
        <taxon>Salmoninae</taxon>
        <taxon>Salmo</taxon>
    </lineage>
</organism>
<feature type="chain" id="PRO_0000117636" description="NADH-ubiquinone oxidoreductase chain 2">
    <location>
        <begin position="1"/>
        <end position="349"/>
    </location>
</feature>
<feature type="transmembrane region" description="Helical" evidence="2">
    <location>
        <begin position="3"/>
        <end position="23"/>
    </location>
</feature>
<feature type="transmembrane region" description="Helical" evidence="2">
    <location>
        <begin position="25"/>
        <end position="45"/>
    </location>
</feature>
<feature type="transmembrane region" description="Helical" evidence="2">
    <location>
        <begin position="66"/>
        <end position="86"/>
    </location>
</feature>
<feature type="transmembrane region" description="Helical" evidence="2">
    <location>
        <begin position="98"/>
        <end position="118"/>
    </location>
</feature>
<feature type="transmembrane region" description="Helical" evidence="2">
    <location>
        <begin position="149"/>
        <end position="171"/>
    </location>
</feature>
<feature type="transmembrane region" description="Helical" evidence="2">
    <location>
        <begin position="178"/>
        <end position="197"/>
    </location>
</feature>
<feature type="transmembrane region" description="Helical" evidence="2">
    <location>
        <begin position="202"/>
        <end position="219"/>
    </location>
</feature>
<feature type="transmembrane region" description="Helical" evidence="2">
    <location>
        <begin position="240"/>
        <end position="260"/>
    </location>
</feature>
<feature type="transmembrane region" description="Helical" evidence="2">
    <location>
        <begin position="274"/>
        <end position="294"/>
    </location>
</feature>
<feature type="transmembrane region" description="Helical" evidence="2">
    <location>
        <begin position="319"/>
        <end position="339"/>
    </location>
</feature>
<feature type="sequence conflict" description="In Ref. 2; AAF61379." evidence="3" ref="2">
    <original>W</original>
    <variation>R</variation>
    <location>
        <position position="79"/>
    </location>
</feature>
<dbReference type="EC" id="7.1.1.2"/>
<dbReference type="EMBL" id="U12143">
    <property type="protein sequence ID" value="AAD04734.1"/>
    <property type="molecule type" value="Genomic_DNA"/>
</dbReference>
<dbReference type="EMBL" id="AF133701">
    <property type="protein sequence ID" value="AAF61379.1"/>
    <property type="molecule type" value="Genomic_DNA"/>
</dbReference>
<dbReference type="PIR" id="T09948">
    <property type="entry name" value="T09948"/>
</dbReference>
<dbReference type="RefSeq" id="NP_008446.1">
    <property type="nucleotide sequence ID" value="NC_001960.1"/>
</dbReference>
<dbReference type="SMR" id="Q35924"/>
<dbReference type="STRING" id="8030.ENSSSAP00000000003"/>
<dbReference type="PaxDb" id="8030-ENSSSAP00000000003"/>
<dbReference type="GeneID" id="808316"/>
<dbReference type="KEGG" id="sasa:808316"/>
<dbReference type="CTD" id="4536"/>
<dbReference type="Proteomes" id="UP000087266">
    <property type="component" value="Mitochondrion MT"/>
</dbReference>
<dbReference type="Bgee" id="ENSSSAG00000000011">
    <property type="expression patterns" value="Expressed in mesonephros and 25 other cell types or tissues"/>
</dbReference>
<dbReference type="GO" id="GO:0005743">
    <property type="term" value="C:mitochondrial inner membrane"/>
    <property type="evidence" value="ECO:0007669"/>
    <property type="project" value="UniProtKB-SubCell"/>
</dbReference>
<dbReference type="GO" id="GO:0008137">
    <property type="term" value="F:NADH dehydrogenase (ubiquinone) activity"/>
    <property type="evidence" value="ECO:0007669"/>
    <property type="project" value="UniProtKB-EC"/>
</dbReference>
<dbReference type="GO" id="GO:0006120">
    <property type="term" value="P:mitochondrial electron transport, NADH to ubiquinone"/>
    <property type="evidence" value="ECO:0007669"/>
    <property type="project" value="InterPro"/>
</dbReference>
<dbReference type="InterPro" id="IPR050175">
    <property type="entry name" value="Complex_I_Subunit_2"/>
</dbReference>
<dbReference type="InterPro" id="IPR010933">
    <property type="entry name" value="NADH_DH_su2_C"/>
</dbReference>
<dbReference type="InterPro" id="IPR003917">
    <property type="entry name" value="NADH_UbQ_OxRdtase_chain2"/>
</dbReference>
<dbReference type="InterPro" id="IPR001750">
    <property type="entry name" value="ND/Mrp_TM"/>
</dbReference>
<dbReference type="PANTHER" id="PTHR46552">
    <property type="entry name" value="NADH-UBIQUINONE OXIDOREDUCTASE CHAIN 2"/>
    <property type="match status" value="1"/>
</dbReference>
<dbReference type="PANTHER" id="PTHR46552:SF1">
    <property type="entry name" value="NADH-UBIQUINONE OXIDOREDUCTASE CHAIN 2"/>
    <property type="match status" value="1"/>
</dbReference>
<dbReference type="Pfam" id="PF06444">
    <property type="entry name" value="NADH_dehy_S2_C"/>
    <property type="match status" value="1"/>
</dbReference>
<dbReference type="Pfam" id="PF00361">
    <property type="entry name" value="Proton_antipo_M"/>
    <property type="match status" value="1"/>
</dbReference>
<dbReference type="PRINTS" id="PR01436">
    <property type="entry name" value="NADHDHGNASE2"/>
</dbReference>
<keyword id="KW-0249">Electron transport</keyword>
<keyword id="KW-0472">Membrane</keyword>
<keyword id="KW-0496">Mitochondrion</keyword>
<keyword id="KW-0999">Mitochondrion inner membrane</keyword>
<keyword id="KW-0520">NAD</keyword>
<keyword id="KW-1185">Reference proteome</keyword>
<keyword id="KW-0679">Respiratory chain</keyword>
<keyword id="KW-1278">Translocase</keyword>
<keyword id="KW-0812">Transmembrane</keyword>
<keyword id="KW-1133">Transmembrane helix</keyword>
<keyword id="KW-0813">Transport</keyword>
<keyword id="KW-0830">Ubiquinone</keyword>
<protein>
    <recommendedName>
        <fullName>NADH-ubiquinone oxidoreductase chain 2</fullName>
        <ecNumber>7.1.1.2</ecNumber>
    </recommendedName>
    <alternativeName>
        <fullName>NADH dehydrogenase subunit 2</fullName>
    </alternativeName>
</protein>
<comment type="function">
    <text evidence="1">Core subunit of the mitochondrial membrane respiratory chain NADH dehydrogenase (Complex I) that is believed to belong to the minimal assembly required for catalysis. Complex I functions in the transfer of electrons from NADH to the respiratory chain. The immediate electron acceptor for the enzyme is believed to be ubiquinone (By similarity).</text>
</comment>
<comment type="catalytic activity">
    <reaction>
        <text>a ubiquinone + NADH + 5 H(+)(in) = a ubiquinol + NAD(+) + 4 H(+)(out)</text>
        <dbReference type="Rhea" id="RHEA:29091"/>
        <dbReference type="Rhea" id="RHEA-COMP:9565"/>
        <dbReference type="Rhea" id="RHEA-COMP:9566"/>
        <dbReference type="ChEBI" id="CHEBI:15378"/>
        <dbReference type="ChEBI" id="CHEBI:16389"/>
        <dbReference type="ChEBI" id="CHEBI:17976"/>
        <dbReference type="ChEBI" id="CHEBI:57540"/>
        <dbReference type="ChEBI" id="CHEBI:57945"/>
        <dbReference type="EC" id="7.1.1.2"/>
    </reaction>
</comment>
<comment type="subcellular location">
    <subcellularLocation>
        <location>Mitochondrion inner membrane</location>
        <topology>Multi-pass membrane protein</topology>
    </subcellularLocation>
</comment>
<comment type="similarity">
    <text evidence="3">Belongs to the complex I subunit 2 family.</text>
</comment>
<accession>Q35924</accession>
<accession>Q9MPG9</accession>
<name>NU2M_SALSA</name>
<geneLocation type="mitochondrion"/>
<sequence length="349" mass="37853">MNPYVLTILLSSLGLGTILTFASSHWLLAWMGLEINTLAIIPIMAQQSHPRAIEATTKYFLTQATAAAMILFASTTNAWLVGEWEIHQLSHPLATTTVMLALALKLGLAPVHFWLPEVLQGLELTTGLILSTWQKLAPFALMIQVAPTINSSLLIAMGLLSTLVGGWGGLNQTQLRKILAYSSIAHLGWMVLILQYAPSLTLLSLFLYIIMTSSAFLTLKTNNSLTINTLATSWTKSPTLAALTALVLLSLGGLPPLSGFMPKWLILQELTKQGLPLSATLAAMTALLSLYFYLRLCYAMTLTIYPNTLTATAPWRLNFTLITLPLSIITILALGLLPLTPAVTTLLTL</sequence>
<gene>
    <name type="primary">MT-ND2</name>
    <name type="synonym">MTND2</name>
    <name type="synonym">NADH2</name>
    <name type="synonym">ND2</name>
</gene>
<reference key="1">
    <citation type="journal article" date="1999" name="Gene">
        <title>The complete mitochondrial DNA sequence of the Atlantic salmon, Salmo salar.</title>
        <authorList>
            <person name="Hurst C.D."/>
            <person name="Bartlett S.E."/>
            <person name="Davidson W.S."/>
            <person name="Bruce I.J."/>
        </authorList>
    </citation>
    <scope>NUCLEOTIDE SEQUENCE [GENOMIC DNA]</scope>
    <source>
        <tissue>Liver</tissue>
    </source>
</reference>
<reference key="2">
    <citation type="submission" date="1999-03" db="EMBL/GenBank/DDBJ databases">
        <title>The complete mitochondrial genome sequence of a teleost, Salmo salar, and comparisons with other salmoniformes.</title>
        <authorList>
            <person name="Arnason U."/>
            <person name="Johnsson E."/>
            <person name="Rasmussen A.S."/>
        </authorList>
    </citation>
    <scope>NUCLEOTIDE SEQUENCE [GENOMIC DNA]</scope>
</reference>
<evidence type="ECO:0000250" key="1"/>
<evidence type="ECO:0000255" key="2"/>
<evidence type="ECO:0000305" key="3"/>